<keyword id="KW-1015">Disulfide bond</keyword>
<keyword id="KW-0349">Heme</keyword>
<keyword id="KW-0376">Hydrogen peroxide</keyword>
<keyword id="KW-0408">Iron</keyword>
<keyword id="KW-0479">Metal-binding</keyword>
<keyword id="KW-0560">Oxidoreductase</keyword>
<keyword id="KW-0575">Peroxidase</keyword>
<keyword id="KW-1185">Reference proteome</keyword>
<keyword id="KW-0964">Secreted</keyword>
<keyword id="KW-0732">Signal</keyword>
<feature type="signal peptide" evidence="1">
    <location>
        <begin position="1"/>
        <end position="25"/>
    </location>
</feature>
<feature type="chain" id="PRO_0000023711" description="Peroxidase 45">
    <location>
        <begin position="26"/>
        <end position="325"/>
    </location>
</feature>
<feature type="active site" description="Proton acceptor" evidence="2 3">
    <location>
        <position position="67"/>
    </location>
</feature>
<feature type="binding site" evidence="2">
    <location>
        <position position="68"/>
    </location>
    <ligand>
        <name>Ca(2+)</name>
        <dbReference type="ChEBI" id="CHEBI:29108"/>
        <label>1</label>
    </ligand>
</feature>
<feature type="binding site" evidence="2">
    <location>
        <position position="71"/>
    </location>
    <ligand>
        <name>Ca(2+)</name>
        <dbReference type="ChEBI" id="CHEBI:29108"/>
        <label>1</label>
    </ligand>
</feature>
<feature type="binding site" evidence="2">
    <location>
        <position position="73"/>
    </location>
    <ligand>
        <name>Ca(2+)</name>
        <dbReference type="ChEBI" id="CHEBI:29108"/>
        <label>1</label>
    </ligand>
</feature>
<feature type="binding site" evidence="2">
    <location>
        <position position="75"/>
    </location>
    <ligand>
        <name>Ca(2+)</name>
        <dbReference type="ChEBI" id="CHEBI:29108"/>
        <label>1</label>
    </ligand>
</feature>
<feature type="binding site" evidence="2">
    <location>
        <position position="77"/>
    </location>
    <ligand>
        <name>Ca(2+)</name>
        <dbReference type="ChEBI" id="CHEBI:29108"/>
        <label>1</label>
    </ligand>
</feature>
<feature type="binding site" evidence="2">
    <location>
        <position position="163"/>
    </location>
    <ligand>
        <name>substrate</name>
    </ligand>
</feature>
<feature type="binding site" description="axial binding residue" evidence="2">
    <location>
        <position position="193"/>
    </location>
    <ligand>
        <name>heme b</name>
        <dbReference type="ChEBI" id="CHEBI:60344"/>
    </ligand>
    <ligandPart>
        <name>Fe</name>
        <dbReference type="ChEBI" id="CHEBI:18248"/>
    </ligandPart>
</feature>
<feature type="binding site" evidence="2">
    <location>
        <position position="194"/>
    </location>
    <ligand>
        <name>Ca(2+)</name>
        <dbReference type="ChEBI" id="CHEBI:29108"/>
        <label>2</label>
    </ligand>
</feature>
<feature type="binding site" evidence="2">
    <location>
        <position position="245"/>
    </location>
    <ligand>
        <name>Ca(2+)</name>
        <dbReference type="ChEBI" id="CHEBI:29108"/>
        <label>2</label>
    </ligand>
</feature>
<feature type="binding site" evidence="2">
    <location>
        <position position="248"/>
    </location>
    <ligand>
        <name>Ca(2+)</name>
        <dbReference type="ChEBI" id="CHEBI:29108"/>
        <label>2</label>
    </ligand>
</feature>
<feature type="binding site" evidence="2">
    <location>
        <position position="253"/>
    </location>
    <ligand>
        <name>Ca(2+)</name>
        <dbReference type="ChEBI" id="CHEBI:29108"/>
        <label>2</label>
    </ligand>
</feature>
<feature type="site" description="Transition state stabilizer" evidence="2">
    <location>
        <position position="63"/>
    </location>
</feature>
<feature type="disulfide bond" evidence="2">
    <location>
        <begin position="36"/>
        <end position="115"/>
    </location>
</feature>
<feature type="disulfide bond" evidence="2">
    <location>
        <begin position="69"/>
        <end position="74"/>
    </location>
</feature>
<feature type="disulfide bond" evidence="2">
    <location>
        <begin position="121"/>
        <end position="321"/>
    </location>
</feature>
<feature type="disulfide bond" evidence="2">
    <location>
        <begin position="200"/>
        <end position="232"/>
    </location>
</feature>
<organism>
    <name type="scientific">Arabidopsis thaliana</name>
    <name type="common">Mouse-ear cress</name>
    <dbReference type="NCBI Taxonomy" id="3702"/>
    <lineage>
        <taxon>Eukaryota</taxon>
        <taxon>Viridiplantae</taxon>
        <taxon>Streptophyta</taxon>
        <taxon>Embryophyta</taxon>
        <taxon>Tracheophyta</taxon>
        <taxon>Spermatophyta</taxon>
        <taxon>Magnoliopsida</taxon>
        <taxon>eudicotyledons</taxon>
        <taxon>Gunneridae</taxon>
        <taxon>Pentapetalae</taxon>
        <taxon>rosids</taxon>
        <taxon>malvids</taxon>
        <taxon>Brassicales</taxon>
        <taxon>Brassicaceae</taxon>
        <taxon>Camelineae</taxon>
        <taxon>Arabidopsis</taxon>
    </lineage>
</organism>
<protein>
    <recommendedName>
        <fullName>Peroxidase 45</fullName>
        <shortName>Atperox P45</shortName>
        <ecNumber>1.11.1.7</ecNumber>
    </recommendedName>
    <alternativeName>
        <fullName>ATP8a</fullName>
    </alternativeName>
</protein>
<gene>
    <name type="primary">PER45</name>
    <name type="synonym">P45</name>
    <name type="ordered locus">At4g30170</name>
    <name type="ORF">F9N11.20</name>
</gene>
<evidence type="ECO:0000255" key="1"/>
<evidence type="ECO:0000255" key="2">
    <source>
        <dbReference type="PROSITE-ProRule" id="PRU00297"/>
    </source>
</evidence>
<evidence type="ECO:0000255" key="3">
    <source>
        <dbReference type="PROSITE-ProRule" id="PRU10012"/>
    </source>
</evidence>
<evidence type="ECO:0000269" key="4">
    <source>
    </source>
</evidence>
<evidence type="ECO:0000269" key="5">
    <source>
    </source>
</evidence>
<evidence type="ECO:0000269" key="6">
    <source ref="7"/>
</evidence>
<proteinExistence type="evidence at protein level"/>
<dbReference type="EC" id="1.11.1.7"/>
<dbReference type="EMBL" id="X98855">
    <property type="protein sequence ID" value="CAA67361.1"/>
    <property type="molecule type" value="mRNA"/>
</dbReference>
<dbReference type="EMBL" id="AL109796">
    <property type="protein sequence ID" value="CAB52461.1"/>
    <property type="molecule type" value="Genomic_DNA"/>
</dbReference>
<dbReference type="EMBL" id="AL161576">
    <property type="protein sequence ID" value="CAB81010.1"/>
    <property type="molecule type" value="Genomic_DNA"/>
</dbReference>
<dbReference type="EMBL" id="CP002687">
    <property type="protein sequence ID" value="AEE85729.1"/>
    <property type="molecule type" value="Genomic_DNA"/>
</dbReference>
<dbReference type="EMBL" id="AF370284">
    <property type="protein sequence ID" value="AAK44099.1"/>
    <property type="molecule type" value="mRNA"/>
</dbReference>
<dbReference type="EMBL" id="AY063051">
    <property type="protein sequence ID" value="AAL34225.1"/>
    <property type="molecule type" value="mRNA"/>
</dbReference>
<dbReference type="EMBL" id="AY085450">
    <property type="protein sequence ID" value="AAM62676.1"/>
    <property type="molecule type" value="mRNA"/>
</dbReference>
<dbReference type="PIR" id="T14077">
    <property type="entry name" value="T14077"/>
</dbReference>
<dbReference type="RefSeq" id="NP_194746.1">
    <property type="nucleotide sequence ID" value="NM_119163.3"/>
</dbReference>
<dbReference type="SMR" id="Q96522"/>
<dbReference type="FunCoup" id="Q96522">
    <property type="interactions" value="148"/>
</dbReference>
<dbReference type="STRING" id="3702.Q96522"/>
<dbReference type="PeroxiBase" id="211">
    <property type="entry name" value="AtPrx45"/>
</dbReference>
<dbReference type="PaxDb" id="3702-AT4G30170.1"/>
<dbReference type="ProteomicsDB" id="236401"/>
<dbReference type="EnsemblPlants" id="AT4G30170.1">
    <property type="protein sequence ID" value="AT4G30170.1"/>
    <property type="gene ID" value="AT4G30170"/>
</dbReference>
<dbReference type="GeneID" id="829140"/>
<dbReference type="Gramene" id="AT4G30170.1">
    <property type="protein sequence ID" value="AT4G30170.1"/>
    <property type="gene ID" value="AT4G30170"/>
</dbReference>
<dbReference type="KEGG" id="ath:AT4G30170"/>
<dbReference type="Araport" id="AT4G30170"/>
<dbReference type="TAIR" id="AT4G30170"/>
<dbReference type="eggNOG" id="ENOG502QUMM">
    <property type="taxonomic scope" value="Eukaryota"/>
</dbReference>
<dbReference type="HOGENOM" id="CLU_010543_0_3_1"/>
<dbReference type="InParanoid" id="Q96522"/>
<dbReference type="OMA" id="NGMFSRH"/>
<dbReference type="OrthoDB" id="2113341at2759"/>
<dbReference type="PhylomeDB" id="Q96522"/>
<dbReference type="BioCyc" id="ARA:AT4G30170-MONOMER"/>
<dbReference type="PRO" id="PR:Q96522"/>
<dbReference type="Proteomes" id="UP000006548">
    <property type="component" value="Chromosome 4"/>
</dbReference>
<dbReference type="ExpressionAtlas" id="Q96522">
    <property type="expression patterns" value="baseline and differential"/>
</dbReference>
<dbReference type="GO" id="GO:0005576">
    <property type="term" value="C:extracellular region"/>
    <property type="evidence" value="ECO:0007669"/>
    <property type="project" value="UniProtKB-SubCell"/>
</dbReference>
<dbReference type="GO" id="GO:0020037">
    <property type="term" value="F:heme binding"/>
    <property type="evidence" value="ECO:0007669"/>
    <property type="project" value="InterPro"/>
</dbReference>
<dbReference type="GO" id="GO:0140825">
    <property type="term" value="F:lactoperoxidase activity"/>
    <property type="evidence" value="ECO:0007669"/>
    <property type="project" value="UniProtKB-EC"/>
</dbReference>
<dbReference type="GO" id="GO:0046872">
    <property type="term" value="F:metal ion binding"/>
    <property type="evidence" value="ECO:0007669"/>
    <property type="project" value="UniProtKB-KW"/>
</dbReference>
<dbReference type="GO" id="GO:0042744">
    <property type="term" value="P:hydrogen peroxide catabolic process"/>
    <property type="evidence" value="ECO:0007669"/>
    <property type="project" value="UniProtKB-KW"/>
</dbReference>
<dbReference type="GO" id="GO:0006979">
    <property type="term" value="P:response to oxidative stress"/>
    <property type="evidence" value="ECO:0007669"/>
    <property type="project" value="InterPro"/>
</dbReference>
<dbReference type="CDD" id="cd00693">
    <property type="entry name" value="secretory_peroxidase"/>
    <property type="match status" value="1"/>
</dbReference>
<dbReference type="FunFam" id="1.10.420.10:FF:000001">
    <property type="entry name" value="Peroxidase"/>
    <property type="match status" value="1"/>
</dbReference>
<dbReference type="FunFam" id="1.10.520.10:FF:000008">
    <property type="entry name" value="Peroxidase"/>
    <property type="match status" value="1"/>
</dbReference>
<dbReference type="Gene3D" id="1.10.520.10">
    <property type="match status" value="1"/>
</dbReference>
<dbReference type="Gene3D" id="1.10.420.10">
    <property type="entry name" value="Peroxidase, domain 2"/>
    <property type="match status" value="1"/>
</dbReference>
<dbReference type="InterPro" id="IPR002016">
    <property type="entry name" value="Haem_peroxidase"/>
</dbReference>
<dbReference type="InterPro" id="IPR010255">
    <property type="entry name" value="Haem_peroxidase_sf"/>
</dbReference>
<dbReference type="InterPro" id="IPR000823">
    <property type="entry name" value="Peroxidase_pln"/>
</dbReference>
<dbReference type="InterPro" id="IPR019794">
    <property type="entry name" value="Peroxidases_AS"/>
</dbReference>
<dbReference type="InterPro" id="IPR019793">
    <property type="entry name" value="Peroxidases_heam-ligand_BS"/>
</dbReference>
<dbReference type="InterPro" id="IPR033905">
    <property type="entry name" value="Secretory_peroxidase"/>
</dbReference>
<dbReference type="PANTHER" id="PTHR31517">
    <property type="match status" value="1"/>
</dbReference>
<dbReference type="PANTHER" id="PTHR31517:SF48">
    <property type="entry name" value="PEROXIDASE 16-RELATED"/>
    <property type="match status" value="1"/>
</dbReference>
<dbReference type="Pfam" id="PF00141">
    <property type="entry name" value="peroxidase"/>
    <property type="match status" value="1"/>
</dbReference>
<dbReference type="PRINTS" id="PR00458">
    <property type="entry name" value="PEROXIDASE"/>
</dbReference>
<dbReference type="PRINTS" id="PR00461">
    <property type="entry name" value="PLPEROXIDASE"/>
</dbReference>
<dbReference type="SUPFAM" id="SSF48113">
    <property type="entry name" value="Heme-dependent peroxidases"/>
    <property type="match status" value="1"/>
</dbReference>
<dbReference type="PROSITE" id="PS00435">
    <property type="entry name" value="PEROXIDASE_1"/>
    <property type="match status" value="1"/>
</dbReference>
<dbReference type="PROSITE" id="PS00436">
    <property type="entry name" value="PEROXIDASE_2"/>
    <property type="match status" value="1"/>
</dbReference>
<dbReference type="PROSITE" id="PS50873">
    <property type="entry name" value="PEROXIDASE_4"/>
    <property type="match status" value="1"/>
</dbReference>
<reference key="1">
    <citation type="submission" date="1996-06" db="EMBL/GenBank/DDBJ databases">
        <title>From expressed sequence tags to structure, function, evolution and expression of 28 ER-targeted Arabidopsis peroxidases.</title>
        <authorList>
            <person name="Welinder K.G."/>
            <person name="Jespersen H.M."/>
            <person name="Kjaersgaard I.V.H."/>
            <person name="Justesen A.F."/>
            <person name="Oestergaard L."/>
            <person name="Abelskov A.K."/>
            <person name="Jensen R.B."/>
            <person name="Hansen L.N."/>
            <person name="Rasmussen S.K."/>
        </authorList>
    </citation>
    <scope>NUCLEOTIDE SEQUENCE</scope>
    <source>
        <strain>cv. Columbia</strain>
    </source>
</reference>
<reference key="2">
    <citation type="journal article" date="1999" name="Nature">
        <title>Sequence and analysis of chromosome 4 of the plant Arabidopsis thaliana.</title>
        <authorList>
            <person name="Mayer K.F.X."/>
            <person name="Schueller C."/>
            <person name="Wambutt R."/>
            <person name="Murphy G."/>
            <person name="Volckaert G."/>
            <person name="Pohl T."/>
            <person name="Duesterhoeft A."/>
            <person name="Stiekema W."/>
            <person name="Entian K.-D."/>
            <person name="Terryn N."/>
            <person name="Harris B."/>
            <person name="Ansorge W."/>
            <person name="Brandt P."/>
            <person name="Grivell L.A."/>
            <person name="Rieger M."/>
            <person name="Weichselgartner M."/>
            <person name="de Simone V."/>
            <person name="Obermaier B."/>
            <person name="Mache R."/>
            <person name="Mueller M."/>
            <person name="Kreis M."/>
            <person name="Delseny M."/>
            <person name="Puigdomenech P."/>
            <person name="Watson M."/>
            <person name="Schmidtheini T."/>
            <person name="Reichert B."/>
            <person name="Portetelle D."/>
            <person name="Perez-Alonso M."/>
            <person name="Boutry M."/>
            <person name="Bancroft I."/>
            <person name="Vos P."/>
            <person name="Hoheisel J."/>
            <person name="Zimmermann W."/>
            <person name="Wedler H."/>
            <person name="Ridley P."/>
            <person name="Langham S.-A."/>
            <person name="McCullagh B."/>
            <person name="Bilham L."/>
            <person name="Robben J."/>
            <person name="van der Schueren J."/>
            <person name="Grymonprez B."/>
            <person name="Chuang Y.-J."/>
            <person name="Vandenbussche F."/>
            <person name="Braeken M."/>
            <person name="Weltjens I."/>
            <person name="Voet M."/>
            <person name="Bastiaens I."/>
            <person name="Aert R."/>
            <person name="Defoor E."/>
            <person name="Weitzenegger T."/>
            <person name="Bothe G."/>
            <person name="Ramsperger U."/>
            <person name="Hilbert H."/>
            <person name="Braun M."/>
            <person name="Holzer E."/>
            <person name="Brandt A."/>
            <person name="Peters S."/>
            <person name="van Staveren M."/>
            <person name="Dirkse W."/>
            <person name="Mooijman P."/>
            <person name="Klein Lankhorst R."/>
            <person name="Rose M."/>
            <person name="Hauf J."/>
            <person name="Koetter P."/>
            <person name="Berneiser S."/>
            <person name="Hempel S."/>
            <person name="Feldpausch M."/>
            <person name="Lamberth S."/>
            <person name="Van den Daele H."/>
            <person name="De Keyser A."/>
            <person name="Buysshaert C."/>
            <person name="Gielen J."/>
            <person name="Villarroel R."/>
            <person name="De Clercq R."/>
            <person name="van Montagu M."/>
            <person name="Rogers J."/>
            <person name="Cronin A."/>
            <person name="Quail M.A."/>
            <person name="Bray-Allen S."/>
            <person name="Clark L."/>
            <person name="Doggett J."/>
            <person name="Hall S."/>
            <person name="Kay M."/>
            <person name="Lennard N."/>
            <person name="McLay K."/>
            <person name="Mayes R."/>
            <person name="Pettett A."/>
            <person name="Rajandream M.A."/>
            <person name="Lyne M."/>
            <person name="Benes V."/>
            <person name="Rechmann S."/>
            <person name="Borkova D."/>
            <person name="Bloecker H."/>
            <person name="Scharfe M."/>
            <person name="Grimm M."/>
            <person name="Loehnert T.-H."/>
            <person name="Dose S."/>
            <person name="de Haan M."/>
            <person name="Maarse A.C."/>
            <person name="Schaefer M."/>
            <person name="Mueller-Auer S."/>
            <person name="Gabel C."/>
            <person name="Fuchs M."/>
            <person name="Fartmann B."/>
            <person name="Granderath K."/>
            <person name="Dauner D."/>
            <person name="Herzl A."/>
            <person name="Neumann S."/>
            <person name="Argiriou A."/>
            <person name="Vitale D."/>
            <person name="Liguori R."/>
            <person name="Piravandi E."/>
            <person name="Massenet O."/>
            <person name="Quigley F."/>
            <person name="Clabauld G."/>
            <person name="Muendlein A."/>
            <person name="Felber R."/>
            <person name="Schnabl S."/>
            <person name="Hiller R."/>
            <person name="Schmidt W."/>
            <person name="Lecharny A."/>
            <person name="Aubourg S."/>
            <person name="Chefdor F."/>
            <person name="Cooke R."/>
            <person name="Berger C."/>
            <person name="Monfort A."/>
            <person name="Casacuberta E."/>
            <person name="Gibbons T."/>
            <person name="Weber N."/>
            <person name="Vandenbol M."/>
            <person name="Bargues M."/>
            <person name="Terol J."/>
            <person name="Torres A."/>
            <person name="Perez-Perez A."/>
            <person name="Purnelle B."/>
            <person name="Bent E."/>
            <person name="Johnson S."/>
            <person name="Tacon D."/>
            <person name="Jesse T."/>
            <person name="Heijnen L."/>
            <person name="Schwarz S."/>
            <person name="Scholler P."/>
            <person name="Heber S."/>
            <person name="Francs P."/>
            <person name="Bielke C."/>
            <person name="Frishman D."/>
            <person name="Haase D."/>
            <person name="Lemcke K."/>
            <person name="Mewes H.-W."/>
            <person name="Stocker S."/>
            <person name="Zaccaria P."/>
            <person name="Bevan M."/>
            <person name="Wilson R.K."/>
            <person name="de la Bastide M."/>
            <person name="Habermann K."/>
            <person name="Parnell L."/>
            <person name="Dedhia N."/>
            <person name="Gnoj L."/>
            <person name="Schutz K."/>
            <person name="Huang E."/>
            <person name="Spiegel L."/>
            <person name="Sekhon M."/>
            <person name="Murray J."/>
            <person name="Sheet P."/>
            <person name="Cordes M."/>
            <person name="Abu-Threideh J."/>
            <person name="Stoneking T."/>
            <person name="Kalicki J."/>
            <person name="Graves T."/>
            <person name="Harmon G."/>
            <person name="Edwards J."/>
            <person name="Latreille P."/>
            <person name="Courtney L."/>
            <person name="Cloud J."/>
            <person name="Abbott A."/>
            <person name="Scott K."/>
            <person name="Johnson D."/>
            <person name="Minx P."/>
            <person name="Bentley D."/>
            <person name="Fulton B."/>
            <person name="Miller N."/>
            <person name="Greco T."/>
            <person name="Kemp K."/>
            <person name="Kramer J."/>
            <person name="Fulton L."/>
            <person name="Mardis E."/>
            <person name="Dante M."/>
            <person name="Pepin K."/>
            <person name="Hillier L.W."/>
            <person name="Nelson J."/>
            <person name="Spieth J."/>
            <person name="Ryan E."/>
            <person name="Andrews S."/>
            <person name="Geisel C."/>
            <person name="Layman D."/>
            <person name="Du H."/>
            <person name="Ali J."/>
            <person name="Berghoff A."/>
            <person name="Jones K."/>
            <person name="Drone K."/>
            <person name="Cotton M."/>
            <person name="Joshu C."/>
            <person name="Antonoiu B."/>
            <person name="Zidanic M."/>
            <person name="Strong C."/>
            <person name="Sun H."/>
            <person name="Lamar B."/>
            <person name="Yordan C."/>
            <person name="Ma P."/>
            <person name="Zhong J."/>
            <person name="Preston R."/>
            <person name="Vil D."/>
            <person name="Shekher M."/>
            <person name="Matero A."/>
            <person name="Shah R."/>
            <person name="Swaby I.K."/>
            <person name="O'Shaughnessy A."/>
            <person name="Rodriguez M."/>
            <person name="Hoffman J."/>
            <person name="Till S."/>
            <person name="Granat S."/>
            <person name="Shohdy N."/>
            <person name="Hasegawa A."/>
            <person name="Hameed A."/>
            <person name="Lodhi M."/>
            <person name="Johnson A."/>
            <person name="Chen E."/>
            <person name="Marra M.A."/>
            <person name="Martienssen R."/>
            <person name="McCombie W.R."/>
        </authorList>
    </citation>
    <scope>NUCLEOTIDE SEQUENCE [LARGE SCALE GENOMIC DNA]</scope>
    <source>
        <strain>cv. Columbia</strain>
    </source>
</reference>
<reference key="3">
    <citation type="journal article" date="2017" name="Plant J.">
        <title>Araport11: a complete reannotation of the Arabidopsis thaliana reference genome.</title>
        <authorList>
            <person name="Cheng C.Y."/>
            <person name="Krishnakumar V."/>
            <person name="Chan A.P."/>
            <person name="Thibaud-Nissen F."/>
            <person name="Schobel S."/>
            <person name="Town C.D."/>
        </authorList>
    </citation>
    <scope>GENOME REANNOTATION</scope>
    <source>
        <strain>cv. Columbia</strain>
    </source>
</reference>
<reference key="4">
    <citation type="journal article" date="2003" name="Science">
        <title>Empirical analysis of transcriptional activity in the Arabidopsis genome.</title>
        <authorList>
            <person name="Yamada K."/>
            <person name="Lim J."/>
            <person name="Dale J.M."/>
            <person name="Chen H."/>
            <person name="Shinn P."/>
            <person name="Palm C.J."/>
            <person name="Southwick A.M."/>
            <person name="Wu H.C."/>
            <person name="Kim C.J."/>
            <person name="Nguyen M."/>
            <person name="Pham P.K."/>
            <person name="Cheuk R.F."/>
            <person name="Karlin-Newmann G."/>
            <person name="Liu S.X."/>
            <person name="Lam B."/>
            <person name="Sakano H."/>
            <person name="Wu T."/>
            <person name="Yu G."/>
            <person name="Miranda M."/>
            <person name="Quach H.L."/>
            <person name="Tripp M."/>
            <person name="Chang C.H."/>
            <person name="Lee J.M."/>
            <person name="Toriumi M.J."/>
            <person name="Chan M.M."/>
            <person name="Tang C.C."/>
            <person name="Onodera C.S."/>
            <person name="Deng J.M."/>
            <person name="Akiyama K."/>
            <person name="Ansari Y."/>
            <person name="Arakawa T."/>
            <person name="Banh J."/>
            <person name="Banno F."/>
            <person name="Bowser L."/>
            <person name="Brooks S.Y."/>
            <person name="Carninci P."/>
            <person name="Chao Q."/>
            <person name="Choy N."/>
            <person name="Enju A."/>
            <person name="Goldsmith A.D."/>
            <person name="Gurjal M."/>
            <person name="Hansen N.F."/>
            <person name="Hayashizaki Y."/>
            <person name="Johnson-Hopson C."/>
            <person name="Hsuan V.W."/>
            <person name="Iida K."/>
            <person name="Karnes M."/>
            <person name="Khan S."/>
            <person name="Koesema E."/>
            <person name="Ishida J."/>
            <person name="Jiang P.X."/>
            <person name="Jones T."/>
            <person name="Kawai J."/>
            <person name="Kamiya A."/>
            <person name="Meyers C."/>
            <person name="Nakajima M."/>
            <person name="Narusaka M."/>
            <person name="Seki M."/>
            <person name="Sakurai T."/>
            <person name="Satou M."/>
            <person name="Tamse R."/>
            <person name="Vaysberg M."/>
            <person name="Wallender E.K."/>
            <person name="Wong C."/>
            <person name="Yamamura Y."/>
            <person name="Yuan S."/>
            <person name="Shinozaki K."/>
            <person name="Davis R.W."/>
            <person name="Theologis A."/>
            <person name="Ecker J.R."/>
        </authorList>
    </citation>
    <scope>NUCLEOTIDE SEQUENCE [LARGE SCALE MRNA]</scope>
    <source>
        <strain>cv. Columbia</strain>
    </source>
</reference>
<reference key="5">
    <citation type="submission" date="2002-03" db="EMBL/GenBank/DDBJ databases">
        <title>Full-length cDNA from Arabidopsis thaliana.</title>
        <authorList>
            <person name="Brover V.V."/>
            <person name="Troukhan M.E."/>
            <person name="Alexandrov N.A."/>
            <person name="Lu Y.-P."/>
            <person name="Flavell R.B."/>
            <person name="Feldmann K.A."/>
        </authorList>
    </citation>
    <scope>NUCLEOTIDE SEQUENCE [LARGE SCALE MRNA]</scope>
</reference>
<reference key="6">
    <citation type="journal article" date="1998" name="FEBS Lett.">
        <title>Computational analyses and annotations of the Arabidopsis peroxidase gene family.</title>
        <authorList>
            <person name="Oestergaard L."/>
            <person name="Pedersen A.G."/>
            <person name="Jespersen H.M."/>
            <person name="Brunak S."/>
            <person name="Welinder K.G."/>
        </authorList>
    </citation>
    <scope>CHARACTERIZATION</scope>
    <source>
        <strain>cv. Columbia</strain>
    </source>
</reference>
<reference key="7">
    <citation type="journal article" date="2001" name="Plant Physiol. Biochem.">
        <title>Toward elucidating the global gene expression patterns of developing Arabidopsis: parallel analysis of 8300 genes by a high-density oligonucleotide probe array.</title>
        <authorList>
            <person name="Zhu T."/>
            <person name="Budworth P."/>
            <person name="Han B."/>
            <person name="Brown D."/>
            <person name="Chang H.-S."/>
            <person name="Zou G."/>
            <person name="Wang X."/>
        </authorList>
    </citation>
    <scope>TISSUE SPECIFICITY</scope>
    <source>
        <strain>cv. Columbia</strain>
    </source>
</reference>
<reference key="8">
    <citation type="journal article" date="2000" name="Proc. Natl. Acad. Sci. U.S.A.">
        <title>Coordinated plant defense responses in Arabidopsis revealed by microarray analysis.</title>
        <authorList>
            <person name="Schenk P.M."/>
            <person name="Kazan K."/>
            <person name="Wilson I."/>
            <person name="Anderson J.P."/>
            <person name="Richmond T."/>
            <person name="Somerville S.C."/>
            <person name="Manners J.M."/>
        </authorList>
    </citation>
    <scope>INDUCTION</scope>
    <source>
        <strain>cv. Columbia</strain>
    </source>
</reference>
<reference key="9">
    <citation type="journal article" date="2002" name="Plant Cell">
        <title>Arabidopsis transcriptome profiling indicates that multiple regulatory pathways are activated during cold acclimation in addition to the CBF cold response pathway.</title>
        <authorList>
            <person name="Fowler S."/>
            <person name="Thomashow M.F."/>
        </authorList>
    </citation>
    <scope>INDUCTION</scope>
    <source>
        <strain>cv. Columbia</strain>
    </source>
</reference>
<reference key="10">
    <citation type="journal article" date="2002" name="Gene">
        <title>Analysis and expression of the class III peroxidase large gene family in Arabidopsis thaliana.</title>
        <authorList>
            <person name="Tognolli M."/>
            <person name="Penel C."/>
            <person name="Greppin H."/>
            <person name="Simon P."/>
        </authorList>
    </citation>
    <scope>GENE FAMILY ORGANIZATION</scope>
    <scope>NOMENCLATURE</scope>
    <source>
        <strain>cv. Columbia</strain>
    </source>
</reference>
<name>PER45_ARATH</name>
<accession>Q96522</accession>
<sequence>MEKNTSQTIFSNFFLLLLLSSCVSAQLRTGFYQNSCPNVETIVRNAVRQKFQQTFVTAPATLRLFFHDCFVRGCDASIMIASPSERDHPDDMSLAGDGFDTVVKAKQAVDSNPNCRNKVSCADILALATREVVVLTGGPSYPVELGRRDGRISTKASVQSQLPQPEFNLNQLNGMFSRHGLSQTDMIALSGAHTIGFAHCGKMSKRIYNFSPTTRIDPSINRGYVVQLKQMCPIGVDVRIAINMDPTSPRTFDNAYFKNLQQGKGLFTSDQILFTDQRSRSTVNSFANSEGAFRQAFITAITKLGRVGVLTGNAGEIRRDCSRVN</sequence>
<comment type="function">
    <text>Removal of H(2)O(2), oxidation of toxic reductants, biosynthesis and degradation of lignin, suberization, auxin catabolism, response to environmental stresses such as wounding, pathogen attack and oxidative stress. These functions might be dependent on each isozyme/isoform in each plant tissue.</text>
</comment>
<comment type="catalytic activity">
    <reaction>
        <text>2 a phenolic donor + H2O2 = 2 a phenolic radical donor + 2 H2O</text>
        <dbReference type="Rhea" id="RHEA:56136"/>
        <dbReference type="ChEBI" id="CHEBI:15377"/>
        <dbReference type="ChEBI" id="CHEBI:16240"/>
        <dbReference type="ChEBI" id="CHEBI:139520"/>
        <dbReference type="ChEBI" id="CHEBI:139521"/>
        <dbReference type="EC" id="1.11.1.7"/>
    </reaction>
</comment>
<comment type="cofactor">
    <cofactor evidence="2">
        <name>heme b</name>
        <dbReference type="ChEBI" id="CHEBI:60344"/>
    </cofactor>
    <text evidence="2">Binds 1 heme b (iron(II)-protoporphyrin IX) group per subunit.</text>
</comment>
<comment type="cofactor">
    <cofactor evidence="2">
        <name>Ca(2+)</name>
        <dbReference type="ChEBI" id="CHEBI:29108"/>
    </cofactor>
    <text evidence="2">Binds 2 calcium ions per subunit.</text>
</comment>
<comment type="subcellular location">
    <subcellularLocation>
        <location evidence="2">Secreted</location>
    </subcellularLocation>
</comment>
<comment type="tissue specificity">
    <text evidence="6">Slightly expressed in roots.</text>
</comment>
<comment type="induction">
    <text evidence="4 5">Up-regulated transiently by a cold treatment. Induced by methyl jasmonate, a plant defense-related signaling molecule.</text>
</comment>
<comment type="miscellaneous">
    <text>There are 73 peroxidase genes in A.thaliana.</text>
</comment>
<comment type="similarity">
    <text evidence="2">Belongs to the peroxidase family. Classical plant (class III) peroxidase subfamily.</text>
</comment>